<reference key="1">
    <citation type="journal article" date="2001" name="Science">
        <title>The genome of the natural genetic engineer Agrobacterium tumefaciens C58.</title>
        <authorList>
            <person name="Wood D.W."/>
            <person name="Setubal J.C."/>
            <person name="Kaul R."/>
            <person name="Monks D.E."/>
            <person name="Kitajima J.P."/>
            <person name="Okura V.K."/>
            <person name="Zhou Y."/>
            <person name="Chen L."/>
            <person name="Wood G.E."/>
            <person name="Almeida N.F. Jr."/>
            <person name="Woo L."/>
            <person name="Chen Y."/>
            <person name="Paulsen I.T."/>
            <person name="Eisen J.A."/>
            <person name="Karp P.D."/>
            <person name="Bovee D. Sr."/>
            <person name="Chapman P."/>
            <person name="Clendenning J."/>
            <person name="Deatherage G."/>
            <person name="Gillet W."/>
            <person name="Grant C."/>
            <person name="Kutyavin T."/>
            <person name="Levy R."/>
            <person name="Li M.-J."/>
            <person name="McClelland E."/>
            <person name="Palmieri A."/>
            <person name="Raymond C."/>
            <person name="Rouse G."/>
            <person name="Saenphimmachak C."/>
            <person name="Wu Z."/>
            <person name="Romero P."/>
            <person name="Gordon D."/>
            <person name="Zhang S."/>
            <person name="Yoo H."/>
            <person name="Tao Y."/>
            <person name="Biddle P."/>
            <person name="Jung M."/>
            <person name="Krespan W."/>
            <person name="Perry M."/>
            <person name="Gordon-Kamm B."/>
            <person name="Liao L."/>
            <person name="Kim S."/>
            <person name="Hendrick C."/>
            <person name="Zhao Z.-Y."/>
            <person name="Dolan M."/>
            <person name="Chumley F."/>
            <person name="Tingey S.V."/>
            <person name="Tomb J.-F."/>
            <person name="Gordon M.P."/>
            <person name="Olson M.V."/>
            <person name="Nester E.W."/>
        </authorList>
    </citation>
    <scope>NUCLEOTIDE SEQUENCE [LARGE SCALE GENOMIC DNA]</scope>
    <source>
        <strain>C58 / ATCC 33970</strain>
    </source>
</reference>
<reference key="2">
    <citation type="journal article" date="2001" name="Science">
        <title>Genome sequence of the plant pathogen and biotechnology agent Agrobacterium tumefaciens C58.</title>
        <authorList>
            <person name="Goodner B."/>
            <person name="Hinkle G."/>
            <person name="Gattung S."/>
            <person name="Miller N."/>
            <person name="Blanchard M."/>
            <person name="Qurollo B."/>
            <person name="Goldman B.S."/>
            <person name="Cao Y."/>
            <person name="Askenazi M."/>
            <person name="Halling C."/>
            <person name="Mullin L."/>
            <person name="Houmiel K."/>
            <person name="Gordon J."/>
            <person name="Vaudin M."/>
            <person name="Iartchouk O."/>
            <person name="Epp A."/>
            <person name="Liu F."/>
            <person name="Wollam C."/>
            <person name="Allinger M."/>
            <person name="Doughty D."/>
            <person name="Scott C."/>
            <person name="Lappas C."/>
            <person name="Markelz B."/>
            <person name="Flanagan C."/>
            <person name="Crowell C."/>
            <person name="Gurson J."/>
            <person name="Lomo C."/>
            <person name="Sear C."/>
            <person name="Strub G."/>
            <person name="Cielo C."/>
            <person name="Slater S."/>
        </authorList>
    </citation>
    <scope>NUCLEOTIDE SEQUENCE [LARGE SCALE GENOMIC DNA]</scope>
    <source>
        <strain>C58 / ATCC 33970</strain>
    </source>
</reference>
<reference key="3">
    <citation type="journal article" date="2022" name="Nat. Commun.">
        <title>Peptidoglycan recycling mediated by an ABC transporter in the plant pathogen Agrobacterium tumefaciens.</title>
        <authorList>
            <person name="Gilmore M.C."/>
            <person name="Cava F."/>
        </authorList>
    </citation>
    <scope>FUNCTION</scope>
    <scope>DISRUPTION PHENOTYPE</scope>
    <source>
        <strain>C58 / ATCC 33970</strain>
    </source>
</reference>
<accession>A9CKL3</accession>
<proteinExistence type="inferred from homology"/>
<evidence type="ECO:0000255" key="1"/>
<evidence type="ECO:0000255" key="2">
    <source>
        <dbReference type="PROSITE-ProRule" id="PRU00441"/>
    </source>
</evidence>
<evidence type="ECO:0000269" key="3">
    <source>
    </source>
</evidence>
<evidence type="ECO:0000303" key="4">
    <source>
    </source>
</evidence>
<evidence type="ECO:0000305" key="5"/>
<evidence type="ECO:0000305" key="6">
    <source>
    </source>
</evidence>
<evidence type="ECO:0000312" key="7">
    <source>
        <dbReference type="EMBL" id="AAK86008.1"/>
    </source>
</evidence>
<sequence length="364" mass="40423">MGAYILRRLALMIPTIVGIMGISFLVIQFAPGGPVEQVVAQLTGQGDSASDRLSGGGDLMGQSGGFDESGSKYRGAQGLDPELIKKLEKQFGFDKPPLTRFLEMMWNYIRFDFGDSFFRNSSVIDLIIDKLPVSASLGFWILIISYVISIPLGIKKAVSDGSTFDVWTSGIIIIGYAVPSFLFGILLIVLFAGGSFFDWFPLRGLVSDNFDQLNWWQKIIDYFWHLTLPLIALSLSAFATTTLLTKNSFIDEIKKQYVVTARAKGLSERKVLYGHVFRNAMLIVIAGFPGAFISAFFTGSLLIENIFSLDGLGRLGYLSVVNRDYPIVFGTLFIFSLMGLVVGLLSDLIYTWIDPRIDFERRDV</sequence>
<gene>
    <name evidence="4" type="primary">yejB</name>
    <name evidence="7" type="ordered locus">Atu0188</name>
</gene>
<comment type="function">
    <text evidence="3 5 6">Part of the ABC transporter complex YejBEF-YepA involved in the uptake of muropeptides, the breakdown products of cell wall peptidoglycan (PubMed:36566216). The import of muropeptides into the cell enables peptidoglycan recycling, which is vital for cell wall integrity in this bacterium (PubMed:36566216). Is also probably part of the ABC transporter complex YejABEF, which is likely involved in broad-spectrum peptide import (Probable). Responsible for the translocation of the substrate across the membrane (Probable).</text>
</comment>
<comment type="subunit">
    <text evidence="6">The complex is composed of one ATP-binding protein (YejF), two transmembrane proteins (YejB and YejE) and a solute-binding protein (YepA or YejA).</text>
</comment>
<comment type="subcellular location">
    <subcellularLocation>
        <location evidence="6">Cell inner membrane</location>
        <topology evidence="1">Multi-pass membrane protein</topology>
    </subcellularLocation>
</comment>
<comment type="disruption phenotype">
    <text evidence="3">The deletion mutant is hypersensitive to ampicillin, in a manner only partly dependent on the beta-lactamase AmpC (PubMed:36566216). Deletion of the yejABEF operon leads to the accumulation of anhydromuramyl tri-, tetra- and pentapeptides in large quantities in the extracellular milieu (PubMed:36566216). The yejABEF mutant displays cell swelling and lysis as well as a severe growth defect (PubMed:36566216).</text>
</comment>
<comment type="similarity">
    <text evidence="5">Belongs to the binding-protein-dependent transport system permease family.</text>
</comment>
<feature type="chain" id="PRO_0000460288" description="Peptidoglycan transport system permease protein YejB">
    <location>
        <begin position="1"/>
        <end position="364"/>
    </location>
</feature>
<feature type="transmembrane region" description="Helical" evidence="1">
    <location>
        <begin position="9"/>
        <end position="29"/>
    </location>
</feature>
<feature type="transmembrane region" description="Helical" evidence="1">
    <location>
        <begin position="134"/>
        <end position="154"/>
    </location>
</feature>
<feature type="transmembrane region" description="Helical" evidence="1">
    <location>
        <begin position="171"/>
        <end position="191"/>
    </location>
</feature>
<feature type="transmembrane region" description="Helical" evidence="1">
    <location>
        <begin position="219"/>
        <end position="239"/>
    </location>
</feature>
<feature type="transmembrane region" description="Helical" evidence="1">
    <location>
        <begin position="283"/>
        <end position="303"/>
    </location>
</feature>
<feature type="transmembrane region" description="Helical" evidence="1">
    <location>
        <begin position="325"/>
        <end position="345"/>
    </location>
</feature>
<feature type="domain" description="ABC transmembrane type-1" evidence="2">
    <location>
        <begin position="131"/>
        <end position="350"/>
    </location>
</feature>
<name>YEJB_AGRFC</name>
<organism>
    <name type="scientific">Agrobacterium fabrum (strain C58 / ATCC 33970)</name>
    <name type="common">Agrobacterium tumefaciens (strain C58)</name>
    <dbReference type="NCBI Taxonomy" id="176299"/>
    <lineage>
        <taxon>Bacteria</taxon>
        <taxon>Pseudomonadati</taxon>
        <taxon>Pseudomonadota</taxon>
        <taxon>Alphaproteobacteria</taxon>
        <taxon>Hyphomicrobiales</taxon>
        <taxon>Rhizobiaceae</taxon>
        <taxon>Rhizobium/Agrobacterium group</taxon>
        <taxon>Agrobacterium</taxon>
        <taxon>Agrobacterium tumefaciens complex</taxon>
    </lineage>
</organism>
<dbReference type="EMBL" id="AE007869">
    <property type="protein sequence ID" value="AAK86008.1"/>
    <property type="molecule type" value="Genomic_DNA"/>
</dbReference>
<dbReference type="PIR" id="AF2599">
    <property type="entry name" value="AF2599"/>
</dbReference>
<dbReference type="PIR" id="G97381">
    <property type="entry name" value="G97381"/>
</dbReference>
<dbReference type="RefSeq" id="NP_353223.1">
    <property type="nucleotide sequence ID" value="NC_003062.2"/>
</dbReference>
<dbReference type="RefSeq" id="WP_006310022.1">
    <property type="nucleotide sequence ID" value="NC_003062.2"/>
</dbReference>
<dbReference type="SMR" id="A9CKL3"/>
<dbReference type="STRING" id="176299.Atu0188"/>
<dbReference type="EnsemblBacteria" id="AAK86008">
    <property type="protein sequence ID" value="AAK86008"/>
    <property type="gene ID" value="Atu0188"/>
</dbReference>
<dbReference type="GeneID" id="1132226"/>
<dbReference type="KEGG" id="atu:Atu0188"/>
<dbReference type="PATRIC" id="fig|176299.10.peg.179"/>
<dbReference type="eggNOG" id="COG4174">
    <property type="taxonomic scope" value="Bacteria"/>
</dbReference>
<dbReference type="HOGENOM" id="CLU_036879_1_1_5"/>
<dbReference type="OrthoDB" id="9807402at2"/>
<dbReference type="PhylomeDB" id="A9CKL3"/>
<dbReference type="BioCyc" id="AGRO:ATU0188-MONOMER"/>
<dbReference type="Proteomes" id="UP000000813">
    <property type="component" value="Chromosome circular"/>
</dbReference>
<dbReference type="GO" id="GO:0005886">
    <property type="term" value="C:plasma membrane"/>
    <property type="evidence" value="ECO:0007669"/>
    <property type="project" value="UniProtKB-SubCell"/>
</dbReference>
<dbReference type="GO" id="GO:0042884">
    <property type="term" value="P:microcin transport"/>
    <property type="evidence" value="ECO:0007669"/>
    <property type="project" value="TreeGrafter"/>
</dbReference>
<dbReference type="GO" id="GO:0015833">
    <property type="term" value="P:peptide transport"/>
    <property type="evidence" value="ECO:0007669"/>
    <property type="project" value="UniProtKB-KW"/>
</dbReference>
<dbReference type="GO" id="GO:0015031">
    <property type="term" value="P:protein transport"/>
    <property type="evidence" value="ECO:0007669"/>
    <property type="project" value="UniProtKB-KW"/>
</dbReference>
<dbReference type="GO" id="GO:0055085">
    <property type="term" value="P:transmembrane transport"/>
    <property type="evidence" value="ECO:0007669"/>
    <property type="project" value="InterPro"/>
</dbReference>
<dbReference type="CDD" id="cd06261">
    <property type="entry name" value="TM_PBP2"/>
    <property type="match status" value="1"/>
</dbReference>
<dbReference type="FunFam" id="1.10.3720.10:FF:000014">
    <property type="entry name" value="Microcin C ABC transporter permease YejB"/>
    <property type="match status" value="1"/>
</dbReference>
<dbReference type="Gene3D" id="1.10.3720.10">
    <property type="entry name" value="MetI-like"/>
    <property type="match status" value="1"/>
</dbReference>
<dbReference type="InterPro" id="IPR000515">
    <property type="entry name" value="MetI-like"/>
</dbReference>
<dbReference type="InterPro" id="IPR035906">
    <property type="entry name" value="MetI-like_sf"/>
</dbReference>
<dbReference type="NCBIfam" id="NF011712">
    <property type="entry name" value="PRK15133.1"/>
    <property type="match status" value="1"/>
</dbReference>
<dbReference type="PANTHER" id="PTHR30465">
    <property type="entry name" value="INNER MEMBRANE ABC TRANSPORTER"/>
    <property type="match status" value="1"/>
</dbReference>
<dbReference type="PANTHER" id="PTHR30465:SF66">
    <property type="entry name" value="INNER MEMBRANE ABC TRANSPORTER PERMEASE PROTEIN YEJB"/>
    <property type="match status" value="1"/>
</dbReference>
<dbReference type="Pfam" id="PF00528">
    <property type="entry name" value="BPD_transp_1"/>
    <property type="match status" value="1"/>
</dbReference>
<dbReference type="SUPFAM" id="SSF161098">
    <property type="entry name" value="MetI-like"/>
    <property type="match status" value="1"/>
</dbReference>
<dbReference type="PROSITE" id="PS50928">
    <property type="entry name" value="ABC_TM1"/>
    <property type="match status" value="1"/>
</dbReference>
<protein>
    <recommendedName>
        <fullName evidence="5">Peptidoglycan transport system permease protein YejB</fullName>
    </recommendedName>
</protein>
<keyword id="KW-0997">Cell inner membrane</keyword>
<keyword id="KW-1003">Cell membrane</keyword>
<keyword id="KW-0472">Membrane</keyword>
<keyword id="KW-0571">Peptide transport</keyword>
<keyword id="KW-0653">Protein transport</keyword>
<keyword id="KW-1185">Reference proteome</keyword>
<keyword id="KW-0812">Transmembrane</keyword>
<keyword id="KW-1133">Transmembrane helix</keyword>
<keyword id="KW-0813">Transport</keyword>